<keyword id="KW-0031">Aminopeptidase</keyword>
<keyword id="KW-0378">Hydrolase</keyword>
<keyword id="KW-0464">Manganese</keyword>
<keyword id="KW-0479">Metal-binding</keyword>
<keyword id="KW-0482">Metalloprotease</keyword>
<keyword id="KW-0645">Protease</keyword>
<keyword id="KW-1185">Reference proteome</keyword>
<reference key="1">
    <citation type="journal article" date="2013" name="G3 (Bethesda)">
        <title>Comparative genomics of a plant-pathogenic fungus, Pyrenophora tritici-repentis, reveals transduplication and the impact of repeat elements on pathogenicity and population divergence.</title>
        <authorList>
            <person name="Manning V.A."/>
            <person name="Pandelova I."/>
            <person name="Dhillon B."/>
            <person name="Wilhelm L.J."/>
            <person name="Goodwin S.B."/>
            <person name="Berlin A.M."/>
            <person name="Figueroa M."/>
            <person name="Freitag M."/>
            <person name="Hane J.K."/>
            <person name="Henrissat B."/>
            <person name="Holman W.H."/>
            <person name="Kodira C.D."/>
            <person name="Martin J."/>
            <person name="Oliver R.P."/>
            <person name="Robbertse B."/>
            <person name="Schackwitz W."/>
            <person name="Schwartz D.C."/>
            <person name="Spatafora J.W."/>
            <person name="Turgeon B.G."/>
            <person name="Yandava C."/>
            <person name="Young S."/>
            <person name="Zhou S."/>
            <person name="Zeng Q."/>
            <person name="Grigoriev I.V."/>
            <person name="Ma L.-J."/>
            <person name="Ciuffetti L.M."/>
        </authorList>
    </citation>
    <scope>NUCLEOTIDE SEQUENCE [LARGE SCALE GENOMIC DNA]</scope>
    <source>
        <strain>Pt-1C-BFP</strain>
    </source>
</reference>
<protein>
    <recommendedName>
        <fullName>Probable Xaa-Pro aminopeptidase pepP</fullName>
        <ecNumber>3.4.11.9</ecNumber>
    </recommendedName>
    <alternativeName>
        <fullName>Aminoacylproline aminopeptidase</fullName>
    </alternativeName>
    <alternativeName>
        <fullName>Prolidase</fullName>
    </alternativeName>
</protein>
<accession>B2WMQ2</accession>
<proteinExistence type="inferred from homology"/>
<gene>
    <name type="primary">pepP</name>
    <name type="ORF">PTRG_11262</name>
</gene>
<organism>
    <name type="scientific">Pyrenophora tritici-repentis (strain Pt-1C-BFP)</name>
    <name type="common">Wheat tan spot fungus</name>
    <name type="synonym">Drechslera tritici-repentis</name>
    <dbReference type="NCBI Taxonomy" id="426418"/>
    <lineage>
        <taxon>Eukaryota</taxon>
        <taxon>Fungi</taxon>
        <taxon>Dikarya</taxon>
        <taxon>Ascomycota</taxon>
        <taxon>Pezizomycotina</taxon>
        <taxon>Dothideomycetes</taxon>
        <taxon>Pleosporomycetidae</taxon>
        <taxon>Pleosporales</taxon>
        <taxon>Pleosporineae</taxon>
        <taxon>Pleosporaceae</taxon>
        <taxon>Pyrenophora</taxon>
    </lineage>
</organism>
<sequence length="463" mass="52110">MAIAENYEDVLKGKYPAKAHAKKVAEWIIAKGGDKNGTIYLEAQKQKLNEDNDGEAPFRQRRYFFYLSGCELPDSYLTYEIATEKLTLFIPPVEPDEVIWSGLPMSPEEAKEKYDIDQCLTTKDVNAHLTSTSESAQSTIYAIPEQVSDHITFISYKEKEFKQLKPAIEYCRVIKSDYEIALIRKANIISTAAHEAVMKAASTAKNECELEAVFLKACVERNAKNQAYHSIVAAGEHAATLHYVHNAAPISDQNLLLLDAGCEVDCYASDITRTFPLKGKFTTESLAIYKIVLDMQHQCINALKEGVVWDSVHELAHKVAIKGLLELGILKGDAEEIFTKRISVAFFPHGLGHYLGMDTHDTGGNPNYADKDVMFRYLRTRGSLPERSVITVEPGVYFCRFIIEPYLKDEEKKKYIDESVLEKYWSVGGVRIEDNVLVTKNGFENLTPTPKEIDDITKLILST</sequence>
<evidence type="ECO:0000250" key="1"/>
<evidence type="ECO:0000305" key="2"/>
<comment type="function">
    <text evidence="1">Catalyzes the removal of a penultimate prolyl residue from the N-termini of peptides.</text>
</comment>
<comment type="catalytic activity">
    <reaction>
        <text>Release of any N-terminal amino acid, including proline, that is linked to proline, even from a dipeptide or tripeptide.</text>
        <dbReference type="EC" id="3.4.11.9"/>
    </reaction>
</comment>
<comment type="cofactor">
    <cofactor evidence="1">
        <name>Mn(2+)</name>
        <dbReference type="ChEBI" id="CHEBI:29035"/>
    </cofactor>
    <text evidence="1">Binds 2 manganese ions per subunit.</text>
</comment>
<comment type="similarity">
    <text evidence="2">Belongs to the peptidase M24B family.</text>
</comment>
<dbReference type="EC" id="3.4.11.9"/>
<dbReference type="EMBL" id="DS231630">
    <property type="protein sequence ID" value="EDU44312.1"/>
    <property type="molecule type" value="Genomic_DNA"/>
</dbReference>
<dbReference type="RefSeq" id="XP_001941593.1">
    <property type="nucleotide sequence ID" value="XM_001941558.1"/>
</dbReference>
<dbReference type="SMR" id="B2WMQ2"/>
<dbReference type="FunCoup" id="B2WMQ2">
    <property type="interactions" value="392"/>
</dbReference>
<dbReference type="STRING" id="426418.B2WMQ2"/>
<dbReference type="MEROPS" id="M24.A09"/>
<dbReference type="EnsemblFungi" id="EDU44312">
    <property type="protein sequence ID" value="EDU44312"/>
    <property type="gene ID" value="PTRG_11262"/>
</dbReference>
<dbReference type="GeneID" id="6349575"/>
<dbReference type="KEGG" id="ptrr:6349575"/>
<dbReference type="eggNOG" id="KOG2737">
    <property type="taxonomic scope" value="Eukaryota"/>
</dbReference>
<dbReference type="HOGENOM" id="CLU_017266_1_2_1"/>
<dbReference type="InParanoid" id="B2WMQ2"/>
<dbReference type="OMA" id="DAHALFF"/>
<dbReference type="OrthoDB" id="8615at28556"/>
<dbReference type="Proteomes" id="UP000001471">
    <property type="component" value="Unassembled WGS sequence"/>
</dbReference>
<dbReference type="GO" id="GO:0030145">
    <property type="term" value="F:manganese ion binding"/>
    <property type="evidence" value="ECO:0007669"/>
    <property type="project" value="InterPro"/>
</dbReference>
<dbReference type="GO" id="GO:0070006">
    <property type="term" value="F:metalloaminopeptidase activity"/>
    <property type="evidence" value="ECO:0007669"/>
    <property type="project" value="InterPro"/>
</dbReference>
<dbReference type="GO" id="GO:0006508">
    <property type="term" value="P:proteolysis"/>
    <property type="evidence" value="ECO:0007669"/>
    <property type="project" value="UniProtKB-KW"/>
</dbReference>
<dbReference type="CDD" id="cd01087">
    <property type="entry name" value="Prolidase"/>
    <property type="match status" value="1"/>
</dbReference>
<dbReference type="FunFam" id="3.90.230.10:FF:000002">
    <property type="entry name" value="Xaa-Pro aminopeptidase 3"/>
    <property type="match status" value="1"/>
</dbReference>
<dbReference type="Gene3D" id="3.90.230.10">
    <property type="entry name" value="Creatinase/methionine aminopeptidase superfamily"/>
    <property type="match status" value="1"/>
</dbReference>
<dbReference type="Gene3D" id="3.40.350.10">
    <property type="entry name" value="Creatinase/prolidase N-terminal domain"/>
    <property type="match status" value="1"/>
</dbReference>
<dbReference type="InterPro" id="IPR007865">
    <property type="entry name" value="Aminopep_P_N"/>
</dbReference>
<dbReference type="InterPro" id="IPR029149">
    <property type="entry name" value="Creatin/AminoP/Spt16_N"/>
</dbReference>
<dbReference type="InterPro" id="IPR036005">
    <property type="entry name" value="Creatinase/aminopeptidase-like"/>
</dbReference>
<dbReference type="InterPro" id="IPR000994">
    <property type="entry name" value="Pept_M24"/>
</dbReference>
<dbReference type="InterPro" id="IPR052433">
    <property type="entry name" value="X-Pro_dipept-like"/>
</dbReference>
<dbReference type="PANTHER" id="PTHR43226">
    <property type="entry name" value="XAA-PRO AMINOPEPTIDASE 3"/>
    <property type="match status" value="1"/>
</dbReference>
<dbReference type="PANTHER" id="PTHR43226:SF1">
    <property type="entry name" value="XAA-PRO DIPEPTIDASE"/>
    <property type="match status" value="1"/>
</dbReference>
<dbReference type="Pfam" id="PF05195">
    <property type="entry name" value="AMP_N"/>
    <property type="match status" value="1"/>
</dbReference>
<dbReference type="Pfam" id="PF00557">
    <property type="entry name" value="Peptidase_M24"/>
    <property type="match status" value="1"/>
</dbReference>
<dbReference type="SMART" id="SM01011">
    <property type="entry name" value="AMP_N"/>
    <property type="match status" value="1"/>
</dbReference>
<dbReference type="SUPFAM" id="SSF55920">
    <property type="entry name" value="Creatinase/aminopeptidase"/>
    <property type="match status" value="1"/>
</dbReference>
<dbReference type="SUPFAM" id="SSF53092">
    <property type="entry name" value="Creatinase/prolidase N-terminal domain"/>
    <property type="match status" value="1"/>
</dbReference>
<feature type="chain" id="PRO_0000411886" description="Probable Xaa-Pro aminopeptidase pepP">
    <location>
        <begin position="1"/>
        <end position="463"/>
    </location>
</feature>
<feature type="binding site" evidence="1">
    <location>
        <position position="259"/>
    </location>
    <ligand>
        <name>Mn(2+)</name>
        <dbReference type="ChEBI" id="CHEBI:29035"/>
        <label>2</label>
    </ligand>
</feature>
<feature type="binding site" evidence="1">
    <location>
        <position position="270"/>
    </location>
    <ligand>
        <name>Mn(2+)</name>
        <dbReference type="ChEBI" id="CHEBI:29035"/>
        <label>1</label>
    </ligand>
</feature>
<feature type="binding site" evidence="1">
    <location>
        <position position="270"/>
    </location>
    <ligand>
        <name>Mn(2+)</name>
        <dbReference type="ChEBI" id="CHEBI:29035"/>
        <label>2</label>
    </ligand>
</feature>
<feature type="binding site" evidence="1">
    <location>
        <position position="393"/>
    </location>
    <ligand>
        <name>Mn(2+)</name>
        <dbReference type="ChEBI" id="CHEBI:29035"/>
        <label>1</label>
    </ligand>
</feature>
<feature type="binding site" evidence="1">
    <location>
        <position position="433"/>
    </location>
    <ligand>
        <name>Mn(2+)</name>
        <dbReference type="ChEBI" id="CHEBI:29035"/>
        <label>1</label>
    </ligand>
</feature>
<feature type="binding site" evidence="1">
    <location>
        <position position="433"/>
    </location>
    <ligand>
        <name>Mn(2+)</name>
        <dbReference type="ChEBI" id="CHEBI:29035"/>
        <label>2</label>
    </ligand>
</feature>
<name>AMPP3_PYRTR</name>